<organism>
    <name type="scientific">Thermus thermophilus (strain ATCC BAA-163 / DSM 7039 / HB27)</name>
    <dbReference type="NCBI Taxonomy" id="262724"/>
    <lineage>
        <taxon>Bacteria</taxon>
        <taxon>Thermotogati</taxon>
        <taxon>Deinococcota</taxon>
        <taxon>Deinococci</taxon>
        <taxon>Thermales</taxon>
        <taxon>Thermaceae</taxon>
        <taxon>Thermus</taxon>
    </lineage>
</organism>
<gene>
    <name evidence="1" type="primary">smpB</name>
    <name type="ordered locus">TT_C0546</name>
</gene>
<reference key="1">
    <citation type="journal article" date="2004" name="Nat. Biotechnol.">
        <title>The genome sequence of the extreme thermophile Thermus thermophilus.</title>
        <authorList>
            <person name="Henne A."/>
            <person name="Brueggemann H."/>
            <person name="Raasch C."/>
            <person name="Wiezer A."/>
            <person name="Hartsch T."/>
            <person name="Liesegang H."/>
            <person name="Johann A."/>
            <person name="Lienard T."/>
            <person name="Gohl O."/>
            <person name="Martinez-Arias R."/>
            <person name="Jacobi C."/>
            <person name="Starkuviene V."/>
            <person name="Schlenczeck S."/>
            <person name="Dencker S."/>
            <person name="Huber R."/>
            <person name="Klenk H.-P."/>
            <person name="Kramer W."/>
            <person name="Merkl R."/>
            <person name="Gottschalk G."/>
            <person name="Fritz H.-J."/>
        </authorList>
    </citation>
    <scope>NUCLEOTIDE SEQUENCE [LARGE SCALE GENOMIC DNA]</scope>
    <source>
        <strain>ATCC BAA-163 / DSM 7039 / HB27</strain>
    </source>
</reference>
<evidence type="ECO:0000255" key="1">
    <source>
        <dbReference type="HAMAP-Rule" id="MF_00023"/>
    </source>
</evidence>
<name>SSRP_THET2</name>
<feature type="chain" id="PRO_0000103055" description="SsrA-binding protein">
    <location>
        <begin position="1"/>
        <end position="144"/>
    </location>
</feature>
<keyword id="KW-0963">Cytoplasm</keyword>
<keyword id="KW-0694">RNA-binding</keyword>
<dbReference type="EMBL" id="AE017221">
    <property type="protein sequence ID" value="AAS80894.1"/>
    <property type="molecule type" value="Genomic_DNA"/>
</dbReference>
<dbReference type="RefSeq" id="WP_011172991.1">
    <property type="nucleotide sequence ID" value="NC_005835.1"/>
</dbReference>
<dbReference type="SMR" id="Q72KA1"/>
<dbReference type="GeneID" id="3169917"/>
<dbReference type="KEGG" id="tth:TT_C0546"/>
<dbReference type="eggNOG" id="COG0691">
    <property type="taxonomic scope" value="Bacteria"/>
</dbReference>
<dbReference type="HOGENOM" id="CLU_108953_0_0_0"/>
<dbReference type="OrthoDB" id="9805462at2"/>
<dbReference type="Proteomes" id="UP000000592">
    <property type="component" value="Chromosome"/>
</dbReference>
<dbReference type="GO" id="GO:0005829">
    <property type="term" value="C:cytosol"/>
    <property type="evidence" value="ECO:0007669"/>
    <property type="project" value="TreeGrafter"/>
</dbReference>
<dbReference type="GO" id="GO:0003723">
    <property type="term" value="F:RNA binding"/>
    <property type="evidence" value="ECO:0007669"/>
    <property type="project" value="UniProtKB-UniRule"/>
</dbReference>
<dbReference type="GO" id="GO:0070929">
    <property type="term" value="P:trans-translation"/>
    <property type="evidence" value="ECO:0007669"/>
    <property type="project" value="UniProtKB-UniRule"/>
</dbReference>
<dbReference type="CDD" id="cd09294">
    <property type="entry name" value="SmpB"/>
    <property type="match status" value="1"/>
</dbReference>
<dbReference type="Gene3D" id="2.40.280.10">
    <property type="match status" value="1"/>
</dbReference>
<dbReference type="HAMAP" id="MF_00023">
    <property type="entry name" value="SmpB"/>
    <property type="match status" value="1"/>
</dbReference>
<dbReference type="InterPro" id="IPR023620">
    <property type="entry name" value="SmpB"/>
</dbReference>
<dbReference type="InterPro" id="IPR000037">
    <property type="entry name" value="SsrA-bd_prot"/>
</dbReference>
<dbReference type="InterPro" id="IPR020081">
    <property type="entry name" value="SsrA-bd_prot_CS"/>
</dbReference>
<dbReference type="NCBIfam" id="NF003843">
    <property type="entry name" value="PRK05422.1"/>
    <property type="match status" value="1"/>
</dbReference>
<dbReference type="NCBIfam" id="TIGR00086">
    <property type="entry name" value="smpB"/>
    <property type="match status" value="1"/>
</dbReference>
<dbReference type="PANTHER" id="PTHR30308:SF2">
    <property type="entry name" value="SSRA-BINDING PROTEIN"/>
    <property type="match status" value="1"/>
</dbReference>
<dbReference type="PANTHER" id="PTHR30308">
    <property type="entry name" value="TMRNA-BINDING COMPONENT OF TRANS-TRANSLATION TAGGING COMPLEX"/>
    <property type="match status" value="1"/>
</dbReference>
<dbReference type="Pfam" id="PF01668">
    <property type="entry name" value="SmpB"/>
    <property type="match status" value="1"/>
</dbReference>
<dbReference type="SUPFAM" id="SSF74982">
    <property type="entry name" value="Small protein B (SmpB)"/>
    <property type="match status" value="1"/>
</dbReference>
<dbReference type="PROSITE" id="PS01317">
    <property type="entry name" value="SSRP"/>
    <property type="match status" value="1"/>
</dbReference>
<accession>Q72KA1</accession>
<sequence>MAPVLENRRARHDYEILETYEAGIALKGTEVKSLRAGKVDFTGSFARFEDGELYLENLYIAPYEKGSYANVDPRRKRKLLLHKHELRRLLGKVEQKGLTLVPLKIYFNERGYAKVLLGLARGKKAYEKRREDKKEAVRRALEEL</sequence>
<proteinExistence type="inferred from homology"/>
<comment type="function">
    <text evidence="1">Required for rescue of stalled ribosomes mediated by trans-translation. Binds to transfer-messenger RNA (tmRNA), required for stable association of tmRNA with ribosomes. tmRNA and SmpB together mimic tRNA shape, replacing the anticodon stem-loop with SmpB. tmRNA is encoded by the ssrA gene; the 2 termini fold to resemble tRNA(Ala) and it encodes a 'tag peptide', a short internal open reading frame. During trans-translation Ala-aminoacylated tmRNA acts like a tRNA, entering the A-site of stalled ribosomes, displacing the stalled mRNA. The ribosome then switches to translate the ORF on the tmRNA; the nascent peptide is terminated with the 'tag peptide' encoded by the tmRNA and targeted for degradation. The ribosome is freed to recommence translation, which seems to be the essential function of trans-translation.</text>
</comment>
<comment type="subcellular location">
    <subcellularLocation>
        <location evidence="1">Cytoplasm</location>
    </subcellularLocation>
    <text evidence="1">The tmRNA-SmpB complex associates with stalled 70S ribosomes.</text>
</comment>
<comment type="similarity">
    <text evidence="1">Belongs to the SmpB family.</text>
</comment>
<protein>
    <recommendedName>
        <fullName evidence="1">SsrA-binding protein</fullName>
    </recommendedName>
    <alternativeName>
        <fullName evidence="1">Small protein B</fullName>
    </alternativeName>
</protein>